<feature type="chain" id="PRO_1000128268" description="4-hydroxythreonine-4-phosphate dehydrogenase">
    <location>
        <begin position="1"/>
        <end position="331"/>
    </location>
</feature>
<feature type="binding site" evidence="1">
    <location>
        <position position="137"/>
    </location>
    <ligand>
        <name>substrate</name>
    </ligand>
</feature>
<feature type="binding site" evidence="1">
    <location>
        <position position="138"/>
    </location>
    <ligand>
        <name>substrate</name>
    </ligand>
</feature>
<feature type="binding site" evidence="1">
    <location>
        <position position="167"/>
    </location>
    <ligand>
        <name>a divalent metal cation</name>
        <dbReference type="ChEBI" id="CHEBI:60240"/>
        <note>ligand shared between dimeric partners</note>
    </ligand>
</feature>
<feature type="binding site" evidence="1">
    <location>
        <position position="212"/>
    </location>
    <ligand>
        <name>a divalent metal cation</name>
        <dbReference type="ChEBI" id="CHEBI:60240"/>
        <note>ligand shared between dimeric partners</note>
    </ligand>
</feature>
<feature type="binding site" evidence="1">
    <location>
        <position position="267"/>
    </location>
    <ligand>
        <name>a divalent metal cation</name>
        <dbReference type="ChEBI" id="CHEBI:60240"/>
        <note>ligand shared between dimeric partners</note>
    </ligand>
</feature>
<feature type="binding site" evidence="1">
    <location>
        <position position="275"/>
    </location>
    <ligand>
        <name>substrate</name>
    </ligand>
</feature>
<feature type="binding site" evidence="1">
    <location>
        <position position="284"/>
    </location>
    <ligand>
        <name>substrate</name>
    </ligand>
</feature>
<feature type="binding site" evidence="1">
    <location>
        <position position="293"/>
    </location>
    <ligand>
        <name>substrate</name>
    </ligand>
</feature>
<keyword id="KW-0170">Cobalt</keyword>
<keyword id="KW-0963">Cytoplasm</keyword>
<keyword id="KW-0460">Magnesium</keyword>
<keyword id="KW-0479">Metal-binding</keyword>
<keyword id="KW-0520">NAD</keyword>
<keyword id="KW-0521">NADP</keyword>
<keyword id="KW-0560">Oxidoreductase</keyword>
<keyword id="KW-0664">Pyridoxine biosynthesis</keyword>
<keyword id="KW-0862">Zinc</keyword>
<dbReference type="EC" id="1.1.1.262" evidence="1"/>
<dbReference type="EMBL" id="CP001048">
    <property type="protein sequence ID" value="ACC87641.1"/>
    <property type="molecule type" value="Genomic_DNA"/>
</dbReference>
<dbReference type="RefSeq" id="WP_011191711.1">
    <property type="nucleotide sequence ID" value="NZ_CP009780.1"/>
</dbReference>
<dbReference type="SMR" id="B2K488"/>
<dbReference type="GeneID" id="49787363"/>
<dbReference type="KEGG" id="ypb:YPTS_0657"/>
<dbReference type="PATRIC" id="fig|502801.10.peg.4342"/>
<dbReference type="UniPathway" id="UPA00244">
    <property type="reaction ID" value="UER00312"/>
</dbReference>
<dbReference type="GO" id="GO:0005737">
    <property type="term" value="C:cytoplasm"/>
    <property type="evidence" value="ECO:0007669"/>
    <property type="project" value="UniProtKB-SubCell"/>
</dbReference>
<dbReference type="GO" id="GO:0050570">
    <property type="term" value="F:4-hydroxythreonine-4-phosphate dehydrogenase activity"/>
    <property type="evidence" value="ECO:0007669"/>
    <property type="project" value="UniProtKB-UniRule"/>
</dbReference>
<dbReference type="GO" id="GO:0050897">
    <property type="term" value="F:cobalt ion binding"/>
    <property type="evidence" value="ECO:0007669"/>
    <property type="project" value="UniProtKB-UniRule"/>
</dbReference>
<dbReference type="GO" id="GO:0000287">
    <property type="term" value="F:magnesium ion binding"/>
    <property type="evidence" value="ECO:0007669"/>
    <property type="project" value="UniProtKB-UniRule"/>
</dbReference>
<dbReference type="GO" id="GO:0051287">
    <property type="term" value="F:NAD binding"/>
    <property type="evidence" value="ECO:0007669"/>
    <property type="project" value="InterPro"/>
</dbReference>
<dbReference type="GO" id="GO:0008270">
    <property type="term" value="F:zinc ion binding"/>
    <property type="evidence" value="ECO:0007669"/>
    <property type="project" value="UniProtKB-UniRule"/>
</dbReference>
<dbReference type="GO" id="GO:0042823">
    <property type="term" value="P:pyridoxal phosphate biosynthetic process"/>
    <property type="evidence" value="ECO:0007669"/>
    <property type="project" value="UniProtKB-UniRule"/>
</dbReference>
<dbReference type="GO" id="GO:0008615">
    <property type="term" value="P:pyridoxine biosynthetic process"/>
    <property type="evidence" value="ECO:0007669"/>
    <property type="project" value="UniProtKB-UniRule"/>
</dbReference>
<dbReference type="Gene3D" id="3.40.718.10">
    <property type="entry name" value="Isopropylmalate Dehydrogenase"/>
    <property type="match status" value="1"/>
</dbReference>
<dbReference type="HAMAP" id="MF_00536">
    <property type="entry name" value="PdxA"/>
    <property type="match status" value="1"/>
</dbReference>
<dbReference type="InterPro" id="IPR037510">
    <property type="entry name" value="PdxA"/>
</dbReference>
<dbReference type="InterPro" id="IPR005255">
    <property type="entry name" value="PdxA_fam"/>
</dbReference>
<dbReference type="NCBIfam" id="TIGR00557">
    <property type="entry name" value="pdxA"/>
    <property type="match status" value="1"/>
</dbReference>
<dbReference type="PANTHER" id="PTHR30004">
    <property type="entry name" value="4-HYDROXYTHREONINE-4-PHOSPHATE DEHYDROGENASE"/>
    <property type="match status" value="1"/>
</dbReference>
<dbReference type="PANTHER" id="PTHR30004:SF5">
    <property type="entry name" value="4-HYDROXYTHREONINE-4-PHOSPHATE DEHYDROGENASE"/>
    <property type="match status" value="1"/>
</dbReference>
<dbReference type="Pfam" id="PF04166">
    <property type="entry name" value="PdxA"/>
    <property type="match status" value="1"/>
</dbReference>
<dbReference type="SUPFAM" id="SSF53659">
    <property type="entry name" value="Isocitrate/Isopropylmalate dehydrogenase-like"/>
    <property type="match status" value="1"/>
</dbReference>
<protein>
    <recommendedName>
        <fullName evidence="1">4-hydroxythreonine-4-phosphate dehydrogenase</fullName>
        <ecNumber evidence="1">1.1.1.262</ecNumber>
    </recommendedName>
    <alternativeName>
        <fullName evidence="1">4-(phosphohydroxy)-L-threonine dehydrogenase</fullName>
    </alternativeName>
</protein>
<gene>
    <name evidence="1" type="primary">pdxA</name>
    <name type="ordered locus">YPTS_0657</name>
</gene>
<name>PDXA_YERPB</name>
<reference key="1">
    <citation type="submission" date="2008-04" db="EMBL/GenBank/DDBJ databases">
        <title>Complete sequence of Yersinia pseudotuberculosis PB1/+.</title>
        <authorList>
            <person name="Copeland A."/>
            <person name="Lucas S."/>
            <person name="Lapidus A."/>
            <person name="Glavina del Rio T."/>
            <person name="Dalin E."/>
            <person name="Tice H."/>
            <person name="Bruce D."/>
            <person name="Goodwin L."/>
            <person name="Pitluck S."/>
            <person name="Munk A.C."/>
            <person name="Brettin T."/>
            <person name="Detter J.C."/>
            <person name="Han C."/>
            <person name="Tapia R."/>
            <person name="Schmutz J."/>
            <person name="Larimer F."/>
            <person name="Land M."/>
            <person name="Hauser L."/>
            <person name="Challacombe J.F."/>
            <person name="Green L."/>
            <person name="Lindler L.E."/>
            <person name="Nikolich M.P."/>
            <person name="Richardson P."/>
        </authorList>
    </citation>
    <scope>NUCLEOTIDE SEQUENCE [LARGE SCALE GENOMIC DNA]</scope>
    <source>
        <strain>PB1/+</strain>
    </source>
</reference>
<comment type="function">
    <text evidence="1">Catalyzes the NAD(P)-dependent oxidation of 4-(phosphooxy)-L-threonine (HTP) into 2-amino-3-oxo-4-(phosphooxy)butyric acid which spontaneously decarboxylates to form 3-amino-2-oxopropyl phosphate (AHAP).</text>
</comment>
<comment type="catalytic activity">
    <reaction evidence="1">
        <text>4-(phosphooxy)-L-threonine + NAD(+) = 3-amino-2-oxopropyl phosphate + CO2 + NADH</text>
        <dbReference type="Rhea" id="RHEA:32275"/>
        <dbReference type="ChEBI" id="CHEBI:16526"/>
        <dbReference type="ChEBI" id="CHEBI:57279"/>
        <dbReference type="ChEBI" id="CHEBI:57540"/>
        <dbReference type="ChEBI" id="CHEBI:57945"/>
        <dbReference type="ChEBI" id="CHEBI:58452"/>
        <dbReference type="EC" id="1.1.1.262"/>
    </reaction>
</comment>
<comment type="cofactor">
    <cofactor evidence="1">
        <name>Zn(2+)</name>
        <dbReference type="ChEBI" id="CHEBI:29105"/>
    </cofactor>
    <cofactor evidence="1">
        <name>Mg(2+)</name>
        <dbReference type="ChEBI" id="CHEBI:18420"/>
    </cofactor>
    <cofactor evidence="1">
        <name>Co(2+)</name>
        <dbReference type="ChEBI" id="CHEBI:48828"/>
    </cofactor>
    <text evidence="1">Binds 1 divalent metal cation per subunit. Can use ions such as Zn(2+), Mg(2+) or Co(2+).</text>
</comment>
<comment type="pathway">
    <text evidence="1">Cofactor biosynthesis; pyridoxine 5'-phosphate biosynthesis; pyridoxine 5'-phosphate from D-erythrose 4-phosphate: step 4/5.</text>
</comment>
<comment type="subunit">
    <text evidence="1">Homodimer.</text>
</comment>
<comment type="subcellular location">
    <subcellularLocation>
        <location evidence="1">Cytoplasm</location>
    </subcellularLocation>
</comment>
<comment type="miscellaneous">
    <text evidence="1">The active site is located at the dimer interface.</text>
</comment>
<comment type="similarity">
    <text evidence="1">Belongs to the PdxA family.</text>
</comment>
<sequence length="331" mass="35240">MHNHNNRLVITPGEPAGVGPDLAIALAQQDWPVELVVCADPALLLARASQLNLPLQLREYQADQPAIAQQAGSLTILPVKTAVNVVPGKLDVGNSHYVVETLAKACDGAISGEFAALVTGPVQKSIINDAGIPFIGHTEFFADRSHCQRVVMMLATEELRVALATTHLPLLAVPGAITQASLHEVITILDNDLKTKFGITQPQIYVCGLNPHAGEGGHMGHEEIDTIIPALNTLRQQGINLIGPLPADTLFQPKYLQHADAVLAMYHDQGLPVLKYQGFGRAVNITLGLPFIRTSVDHGTALELAATGTADVGSFITALNLAIKMINNSNE</sequence>
<evidence type="ECO:0000255" key="1">
    <source>
        <dbReference type="HAMAP-Rule" id="MF_00536"/>
    </source>
</evidence>
<accession>B2K488</accession>
<organism>
    <name type="scientific">Yersinia pseudotuberculosis serotype IB (strain PB1/+)</name>
    <dbReference type="NCBI Taxonomy" id="502801"/>
    <lineage>
        <taxon>Bacteria</taxon>
        <taxon>Pseudomonadati</taxon>
        <taxon>Pseudomonadota</taxon>
        <taxon>Gammaproteobacteria</taxon>
        <taxon>Enterobacterales</taxon>
        <taxon>Yersiniaceae</taxon>
        <taxon>Yersinia</taxon>
    </lineage>
</organism>
<proteinExistence type="inferred from homology"/>